<sequence length="453" mass="48250">MAFSVVILAAGKGTRMKSSMPKVLHPIGAKPMVQRIIDTVHQLGAASINLVYGHQAEQLQQALGHNALNWCLQAEQLGTGHAVQQAVPHISDDEDVLILVGDAPLIKANTLHNLLQVKNNADVALLTVNVADPTGMGRIIRQGDNVTAIVEHKDASDAQRQICEINTGMMVLNGKDLKRWLANLNSNNAQGEFYLTDVIEMAANEGKVIKAAQPNSEIEVEGINNRKQLAAIERAFQFEQAQELMMQGVSLLDPHRFDLRGDIIVGQDISIDVNVVIEGTVKIGSNVTIGPNCILKDCEIADGATIEANSMLDQAIVGENCSVGPYARLRPGAVMHENARVGNFVEMKKTTLGKGSKANHLTYLGDTTVGIGANIGAGTITCNYDGVNKSKTIIGDGAFIGSNSALVAPVQIGNMATVGAGSVVTKTVADQELAIARAKQRNVSGWQRPTKPE</sequence>
<name>GLMU_PSEA6</name>
<feature type="chain" id="PRO_0000263146" description="Bifunctional protein GlmU">
    <location>
        <begin position="1"/>
        <end position="453"/>
    </location>
</feature>
<feature type="region of interest" description="Pyrophosphorylase" evidence="1">
    <location>
        <begin position="1"/>
        <end position="226"/>
    </location>
</feature>
<feature type="region of interest" description="Linker" evidence="1">
    <location>
        <begin position="227"/>
        <end position="247"/>
    </location>
</feature>
<feature type="region of interest" description="N-acetyltransferase" evidence="1">
    <location>
        <begin position="248"/>
        <end position="453"/>
    </location>
</feature>
<feature type="active site" description="Proton acceptor" evidence="1">
    <location>
        <position position="360"/>
    </location>
</feature>
<feature type="binding site" evidence="1">
    <location>
        <begin position="8"/>
        <end position="11"/>
    </location>
    <ligand>
        <name>UDP-N-acetyl-alpha-D-glucosamine</name>
        <dbReference type="ChEBI" id="CHEBI:57705"/>
    </ligand>
</feature>
<feature type="binding site" evidence="1">
    <location>
        <position position="22"/>
    </location>
    <ligand>
        <name>UDP-N-acetyl-alpha-D-glucosamine</name>
        <dbReference type="ChEBI" id="CHEBI:57705"/>
    </ligand>
</feature>
<feature type="binding site" evidence="1">
    <location>
        <position position="73"/>
    </location>
    <ligand>
        <name>UDP-N-acetyl-alpha-D-glucosamine</name>
        <dbReference type="ChEBI" id="CHEBI:57705"/>
    </ligand>
</feature>
<feature type="binding site" evidence="1">
    <location>
        <begin position="78"/>
        <end position="79"/>
    </location>
    <ligand>
        <name>UDP-N-acetyl-alpha-D-glucosamine</name>
        <dbReference type="ChEBI" id="CHEBI:57705"/>
    </ligand>
</feature>
<feature type="binding site" evidence="1">
    <location>
        <position position="102"/>
    </location>
    <ligand>
        <name>Mg(2+)</name>
        <dbReference type="ChEBI" id="CHEBI:18420"/>
    </ligand>
</feature>
<feature type="binding site" evidence="1">
    <location>
        <position position="137"/>
    </location>
    <ligand>
        <name>UDP-N-acetyl-alpha-D-glucosamine</name>
        <dbReference type="ChEBI" id="CHEBI:57705"/>
    </ligand>
</feature>
<feature type="binding site" evidence="1">
    <location>
        <position position="151"/>
    </location>
    <ligand>
        <name>UDP-N-acetyl-alpha-D-glucosamine</name>
        <dbReference type="ChEBI" id="CHEBI:57705"/>
    </ligand>
</feature>
<feature type="binding site" evidence="1">
    <location>
        <position position="166"/>
    </location>
    <ligand>
        <name>UDP-N-acetyl-alpha-D-glucosamine</name>
        <dbReference type="ChEBI" id="CHEBI:57705"/>
    </ligand>
</feature>
<feature type="binding site" evidence="1">
    <location>
        <position position="224"/>
    </location>
    <ligand>
        <name>Mg(2+)</name>
        <dbReference type="ChEBI" id="CHEBI:18420"/>
    </ligand>
</feature>
<feature type="binding site" evidence="1">
    <location>
        <position position="224"/>
    </location>
    <ligand>
        <name>UDP-N-acetyl-alpha-D-glucosamine</name>
        <dbReference type="ChEBI" id="CHEBI:57705"/>
    </ligand>
</feature>
<feature type="binding site" evidence="1">
    <location>
        <position position="330"/>
    </location>
    <ligand>
        <name>UDP-N-acetyl-alpha-D-glucosamine</name>
        <dbReference type="ChEBI" id="CHEBI:57705"/>
    </ligand>
</feature>
<feature type="binding site" evidence="1">
    <location>
        <position position="348"/>
    </location>
    <ligand>
        <name>UDP-N-acetyl-alpha-D-glucosamine</name>
        <dbReference type="ChEBI" id="CHEBI:57705"/>
    </ligand>
</feature>
<feature type="binding site" evidence="1">
    <location>
        <position position="363"/>
    </location>
    <ligand>
        <name>UDP-N-acetyl-alpha-D-glucosamine</name>
        <dbReference type="ChEBI" id="CHEBI:57705"/>
    </ligand>
</feature>
<feature type="binding site" evidence="1">
    <location>
        <position position="374"/>
    </location>
    <ligand>
        <name>UDP-N-acetyl-alpha-D-glucosamine</name>
        <dbReference type="ChEBI" id="CHEBI:57705"/>
    </ligand>
</feature>
<feature type="binding site" evidence="1">
    <location>
        <position position="377"/>
    </location>
    <ligand>
        <name>acetyl-CoA</name>
        <dbReference type="ChEBI" id="CHEBI:57288"/>
    </ligand>
</feature>
<feature type="binding site" evidence="1">
    <location>
        <begin position="383"/>
        <end position="384"/>
    </location>
    <ligand>
        <name>acetyl-CoA</name>
        <dbReference type="ChEBI" id="CHEBI:57288"/>
    </ligand>
</feature>
<feature type="binding site" evidence="1">
    <location>
        <position position="402"/>
    </location>
    <ligand>
        <name>acetyl-CoA</name>
        <dbReference type="ChEBI" id="CHEBI:57288"/>
    </ligand>
</feature>
<feature type="binding site" evidence="1">
    <location>
        <position position="420"/>
    </location>
    <ligand>
        <name>acetyl-CoA</name>
        <dbReference type="ChEBI" id="CHEBI:57288"/>
    </ligand>
</feature>
<feature type="binding site" evidence="1">
    <location>
        <position position="437"/>
    </location>
    <ligand>
        <name>acetyl-CoA</name>
        <dbReference type="ChEBI" id="CHEBI:57288"/>
    </ligand>
</feature>
<reference key="1">
    <citation type="submission" date="2006-06" db="EMBL/GenBank/DDBJ databases">
        <title>Complete sequence of Pseudoalteromonas atlantica T6c.</title>
        <authorList>
            <consortium name="US DOE Joint Genome Institute"/>
            <person name="Copeland A."/>
            <person name="Lucas S."/>
            <person name="Lapidus A."/>
            <person name="Barry K."/>
            <person name="Detter J.C."/>
            <person name="Glavina del Rio T."/>
            <person name="Hammon N."/>
            <person name="Israni S."/>
            <person name="Dalin E."/>
            <person name="Tice H."/>
            <person name="Pitluck S."/>
            <person name="Saunders E."/>
            <person name="Brettin T."/>
            <person name="Bruce D."/>
            <person name="Han C."/>
            <person name="Tapia R."/>
            <person name="Gilna P."/>
            <person name="Schmutz J."/>
            <person name="Larimer F."/>
            <person name="Land M."/>
            <person name="Hauser L."/>
            <person name="Kyrpides N."/>
            <person name="Kim E."/>
            <person name="Karls A.C."/>
            <person name="Bartlett D."/>
            <person name="Higgins B.P."/>
            <person name="Richardson P."/>
        </authorList>
    </citation>
    <scope>NUCLEOTIDE SEQUENCE [LARGE SCALE GENOMIC DNA]</scope>
    <source>
        <strain>T6c / ATCC BAA-1087</strain>
    </source>
</reference>
<evidence type="ECO:0000255" key="1">
    <source>
        <dbReference type="HAMAP-Rule" id="MF_01631"/>
    </source>
</evidence>
<comment type="function">
    <text evidence="1">Catalyzes the last two sequential reactions in the de novo biosynthetic pathway for UDP-N-acetylglucosamine (UDP-GlcNAc). The C-terminal domain catalyzes the transfer of acetyl group from acetyl coenzyme A to glucosamine-1-phosphate (GlcN-1-P) to produce N-acetylglucosamine-1-phosphate (GlcNAc-1-P), which is converted into UDP-GlcNAc by the transfer of uridine 5-monophosphate (from uridine 5-triphosphate), a reaction catalyzed by the N-terminal domain.</text>
</comment>
<comment type="catalytic activity">
    <reaction evidence="1">
        <text>alpha-D-glucosamine 1-phosphate + acetyl-CoA = N-acetyl-alpha-D-glucosamine 1-phosphate + CoA + H(+)</text>
        <dbReference type="Rhea" id="RHEA:13725"/>
        <dbReference type="ChEBI" id="CHEBI:15378"/>
        <dbReference type="ChEBI" id="CHEBI:57287"/>
        <dbReference type="ChEBI" id="CHEBI:57288"/>
        <dbReference type="ChEBI" id="CHEBI:57776"/>
        <dbReference type="ChEBI" id="CHEBI:58516"/>
        <dbReference type="EC" id="2.3.1.157"/>
    </reaction>
</comment>
<comment type="catalytic activity">
    <reaction evidence="1">
        <text>N-acetyl-alpha-D-glucosamine 1-phosphate + UTP + H(+) = UDP-N-acetyl-alpha-D-glucosamine + diphosphate</text>
        <dbReference type="Rhea" id="RHEA:13509"/>
        <dbReference type="ChEBI" id="CHEBI:15378"/>
        <dbReference type="ChEBI" id="CHEBI:33019"/>
        <dbReference type="ChEBI" id="CHEBI:46398"/>
        <dbReference type="ChEBI" id="CHEBI:57705"/>
        <dbReference type="ChEBI" id="CHEBI:57776"/>
        <dbReference type="EC" id="2.7.7.23"/>
    </reaction>
</comment>
<comment type="cofactor">
    <cofactor evidence="1">
        <name>Mg(2+)</name>
        <dbReference type="ChEBI" id="CHEBI:18420"/>
    </cofactor>
    <text evidence="1">Binds 1 Mg(2+) ion per subunit.</text>
</comment>
<comment type="pathway">
    <text evidence="1">Nucleotide-sugar biosynthesis; UDP-N-acetyl-alpha-D-glucosamine biosynthesis; N-acetyl-alpha-D-glucosamine 1-phosphate from alpha-D-glucosamine 6-phosphate (route II): step 2/2.</text>
</comment>
<comment type="pathway">
    <text evidence="1">Nucleotide-sugar biosynthesis; UDP-N-acetyl-alpha-D-glucosamine biosynthesis; UDP-N-acetyl-alpha-D-glucosamine from N-acetyl-alpha-D-glucosamine 1-phosphate: step 1/1.</text>
</comment>
<comment type="pathway">
    <text evidence="1">Bacterial outer membrane biogenesis; LPS lipid A biosynthesis.</text>
</comment>
<comment type="subunit">
    <text evidence="1">Homotrimer.</text>
</comment>
<comment type="subcellular location">
    <subcellularLocation>
        <location evidence="1">Cytoplasm</location>
    </subcellularLocation>
</comment>
<comment type="similarity">
    <text evidence="1">In the N-terminal section; belongs to the N-acetylglucosamine-1-phosphate uridyltransferase family.</text>
</comment>
<comment type="similarity">
    <text evidence="1">In the C-terminal section; belongs to the transferase hexapeptide repeat family.</text>
</comment>
<protein>
    <recommendedName>
        <fullName evidence="1">Bifunctional protein GlmU</fullName>
    </recommendedName>
    <domain>
        <recommendedName>
            <fullName evidence="1">UDP-N-acetylglucosamine pyrophosphorylase</fullName>
            <ecNumber evidence="1">2.7.7.23</ecNumber>
        </recommendedName>
        <alternativeName>
            <fullName evidence="1">N-acetylglucosamine-1-phosphate uridyltransferase</fullName>
        </alternativeName>
    </domain>
    <domain>
        <recommendedName>
            <fullName evidence="1">Glucosamine-1-phosphate N-acetyltransferase</fullName>
            <ecNumber evidence="1">2.3.1.157</ecNumber>
        </recommendedName>
    </domain>
</protein>
<gene>
    <name evidence="1" type="primary">glmU</name>
    <name type="ordered locus">Patl_3879</name>
</gene>
<accession>Q15P09</accession>
<keyword id="KW-0012">Acyltransferase</keyword>
<keyword id="KW-0133">Cell shape</keyword>
<keyword id="KW-0961">Cell wall biogenesis/degradation</keyword>
<keyword id="KW-0963">Cytoplasm</keyword>
<keyword id="KW-0460">Magnesium</keyword>
<keyword id="KW-0479">Metal-binding</keyword>
<keyword id="KW-0511">Multifunctional enzyme</keyword>
<keyword id="KW-0548">Nucleotidyltransferase</keyword>
<keyword id="KW-0573">Peptidoglycan synthesis</keyword>
<keyword id="KW-0677">Repeat</keyword>
<keyword id="KW-0808">Transferase</keyword>
<proteinExistence type="inferred from homology"/>
<dbReference type="EC" id="2.7.7.23" evidence="1"/>
<dbReference type="EC" id="2.3.1.157" evidence="1"/>
<dbReference type="EMBL" id="CP000388">
    <property type="protein sequence ID" value="ABG42379.1"/>
    <property type="molecule type" value="Genomic_DNA"/>
</dbReference>
<dbReference type="RefSeq" id="WP_011576586.1">
    <property type="nucleotide sequence ID" value="NC_008228.1"/>
</dbReference>
<dbReference type="SMR" id="Q15P09"/>
<dbReference type="STRING" id="342610.Patl_3879"/>
<dbReference type="KEGG" id="pat:Patl_3879"/>
<dbReference type="eggNOG" id="COG1207">
    <property type="taxonomic scope" value="Bacteria"/>
</dbReference>
<dbReference type="HOGENOM" id="CLU_029499_15_2_6"/>
<dbReference type="OrthoDB" id="9775031at2"/>
<dbReference type="UniPathway" id="UPA00113">
    <property type="reaction ID" value="UER00532"/>
</dbReference>
<dbReference type="UniPathway" id="UPA00113">
    <property type="reaction ID" value="UER00533"/>
</dbReference>
<dbReference type="UniPathway" id="UPA00973"/>
<dbReference type="Proteomes" id="UP000001981">
    <property type="component" value="Chromosome"/>
</dbReference>
<dbReference type="GO" id="GO:0005737">
    <property type="term" value="C:cytoplasm"/>
    <property type="evidence" value="ECO:0007669"/>
    <property type="project" value="UniProtKB-SubCell"/>
</dbReference>
<dbReference type="GO" id="GO:0016020">
    <property type="term" value="C:membrane"/>
    <property type="evidence" value="ECO:0007669"/>
    <property type="project" value="GOC"/>
</dbReference>
<dbReference type="GO" id="GO:0019134">
    <property type="term" value="F:glucosamine-1-phosphate N-acetyltransferase activity"/>
    <property type="evidence" value="ECO:0007669"/>
    <property type="project" value="UniProtKB-UniRule"/>
</dbReference>
<dbReference type="GO" id="GO:0000287">
    <property type="term" value="F:magnesium ion binding"/>
    <property type="evidence" value="ECO:0007669"/>
    <property type="project" value="UniProtKB-UniRule"/>
</dbReference>
<dbReference type="GO" id="GO:0003977">
    <property type="term" value="F:UDP-N-acetylglucosamine diphosphorylase activity"/>
    <property type="evidence" value="ECO:0007669"/>
    <property type="project" value="UniProtKB-UniRule"/>
</dbReference>
<dbReference type="GO" id="GO:0000902">
    <property type="term" value="P:cell morphogenesis"/>
    <property type="evidence" value="ECO:0007669"/>
    <property type="project" value="UniProtKB-UniRule"/>
</dbReference>
<dbReference type="GO" id="GO:0071555">
    <property type="term" value="P:cell wall organization"/>
    <property type="evidence" value="ECO:0007669"/>
    <property type="project" value="UniProtKB-KW"/>
</dbReference>
<dbReference type="GO" id="GO:0009245">
    <property type="term" value="P:lipid A biosynthetic process"/>
    <property type="evidence" value="ECO:0007669"/>
    <property type="project" value="UniProtKB-UniRule"/>
</dbReference>
<dbReference type="GO" id="GO:0009252">
    <property type="term" value="P:peptidoglycan biosynthetic process"/>
    <property type="evidence" value="ECO:0007669"/>
    <property type="project" value="UniProtKB-UniRule"/>
</dbReference>
<dbReference type="GO" id="GO:0008360">
    <property type="term" value="P:regulation of cell shape"/>
    <property type="evidence" value="ECO:0007669"/>
    <property type="project" value="UniProtKB-KW"/>
</dbReference>
<dbReference type="GO" id="GO:0006048">
    <property type="term" value="P:UDP-N-acetylglucosamine biosynthetic process"/>
    <property type="evidence" value="ECO:0007669"/>
    <property type="project" value="UniProtKB-UniPathway"/>
</dbReference>
<dbReference type="CDD" id="cd02540">
    <property type="entry name" value="GT2_GlmU_N_bac"/>
    <property type="match status" value="1"/>
</dbReference>
<dbReference type="CDD" id="cd03353">
    <property type="entry name" value="LbH_GlmU_C"/>
    <property type="match status" value="1"/>
</dbReference>
<dbReference type="Gene3D" id="2.160.10.10">
    <property type="entry name" value="Hexapeptide repeat proteins"/>
    <property type="match status" value="1"/>
</dbReference>
<dbReference type="Gene3D" id="3.90.550.10">
    <property type="entry name" value="Spore Coat Polysaccharide Biosynthesis Protein SpsA, Chain A"/>
    <property type="match status" value="1"/>
</dbReference>
<dbReference type="HAMAP" id="MF_01631">
    <property type="entry name" value="GlmU"/>
    <property type="match status" value="1"/>
</dbReference>
<dbReference type="InterPro" id="IPR005882">
    <property type="entry name" value="Bifunctional_GlmU"/>
</dbReference>
<dbReference type="InterPro" id="IPR050065">
    <property type="entry name" value="GlmU-like"/>
</dbReference>
<dbReference type="InterPro" id="IPR038009">
    <property type="entry name" value="GlmU_C_LbH"/>
</dbReference>
<dbReference type="InterPro" id="IPR001451">
    <property type="entry name" value="Hexapep"/>
</dbReference>
<dbReference type="InterPro" id="IPR018357">
    <property type="entry name" value="Hexapep_transf_CS"/>
</dbReference>
<dbReference type="InterPro" id="IPR025877">
    <property type="entry name" value="MobA-like_NTP_Trfase"/>
</dbReference>
<dbReference type="InterPro" id="IPR029044">
    <property type="entry name" value="Nucleotide-diphossugar_trans"/>
</dbReference>
<dbReference type="InterPro" id="IPR011004">
    <property type="entry name" value="Trimer_LpxA-like_sf"/>
</dbReference>
<dbReference type="NCBIfam" id="TIGR01173">
    <property type="entry name" value="glmU"/>
    <property type="match status" value="1"/>
</dbReference>
<dbReference type="PANTHER" id="PTHR43584:SF3">
    <property type="entry name" value="BIFUNCTIONAL PROTEIN GLMU"/>
    <property type="match status" value="1"/>
</dbReference>
<dbReference type="PANTHER" id="PTHR43584">
    <property type="entry name" value="NUCLEOTIDYL TRANSFERASE"/>
    <property type="match status" value="1"/>
</dbReference>
<dbReference type="Pfam" id="PF14602">
    <property type="entry name" value="Hexapep_2"/>
    <property type="match status" value="2"/>
</dbReference>
<dbReference type="Pfam" id="PF12804">
    <property type="entry name" value="NTP_transf_3"/>
    <property type="match status" value="1"/>
</dbReference>
<dbReference type="SUPFAM" id="SSF53448">
    <property type="entry name" value="Nucleotide-diphospho-sugar transferases"/>
    <property type="match status" value="1"/>
</dbReference>
<dbReference type="SUPFAM" id="SSF51161">
    <property type="entry name" value="Trimeric LpxA-like enzymes"/>
    <property type="match status" value="1"/>
</dbReference>
<dbReference type="PROSITE" id="PS00101">
    <property type="entry name" value="HEXAPEP_TRANSFERASES"/>
    <property type="match status" value="1"/>
</dbReference>
<organism>
    <name type="scientific">Pseudoalteromonas atlantica (strain T6c / ATCC BAA-1087)</name>
    <dbReference type="NCBI Taxonomy" id="3042615"/>
    <lineage>
        <taxon>Bacteria</taxon>
        <taxon>Pseudomonadati</taxon>
        <taxon>Pseudomonadota</taxon>
        <taxon>Gammaproteobacteria</taxon>
        <taxon>Alteromonadales</taxon>
        <taxon>Alteromonadaceae</taxon>
        <taxon>Paraglaciecola</taxon>
    </lineage>
</organism>